<organism>
    <name type="scientific">Danio rerio</name>
    <name type="common">Zebrafish</name>
    <name type="synonym">Brachydanio rerio</name>
    <dbReference type="NCBI Taxonomy" id="7955"/>
    <lineage>
        <taxon>Eukaryota</taxon>
        <taxon>Metazoa</taxon>
        <taxon>Chordata</taxon>
        <taxon>Craniata</taxon>
        <taxon>Vertebrata</taxon>
        <taxon>Euteleostomi</taxon>
        <taxon>Actinopterygii</taxon>
        <taxon>Neopterygii</taxon>
        <taxon>Teleostei</taxon>
        <taxon>Ostariophysi</taxon>
        <taxon>Cypriniformes</taxon>
        <taxon>Danionidae</taxon>
        <taxon>Danioninae</taxon>
        <taxon>Danio</taxon>
    </lineage>
</organism>
<protein>
    <recommendedName>
        <fullName>Multidrug and toxin extrusion protein 1</fullName>
        <shortName>MATE-1</shortName>
    </recommendedName>
    <alternativeName>
        <fullName>Solute carrier family 47 member 1</fullName>
    </alternativeName>
</protein>
<dbReference type="EMBL" id="BC129166">
    <property type="protein sequence ID" value="AAI29167.1"/>
    <property type="molecule type" value="mRNA"/>
</dbReference>
<dbReference type="RefSeq" id="NP_001073648.1">
    <property type="nucleotide sequence ID" value="NM_001080179.1"/>
</dbReference>
<dbReference type="SMR" id="A1L1P9"/>
<dbReference type="FunCoup" id="A1L1P9">
    <property type="interactions" value="135"/>
</dbReference>
<dbReference type="STRING" id="7955.ENSDARP00000078672"/>
<dbReference type="PaxDb" id="7955-ENSDARP00000078672"/>
<dbReference type="PeptideAtlas" id="A1L1P9"/>
<dbReference type="Ensembl" id="ENSDART00000084237">
    <property type="protein sequence ID" value="ENSDARP00000078672"/>
    <property type="gene ID" value="ENSDARG00000060051"/>
</dbReference>
<dbReference type="GeneID" id="560024"/>
<dbReference type="KEGG" id="dre:560024"/>
<dbReference type="AGR" id="ZFIN:ZDB-GENE-070112-1472"/>
<dbReference type="CTD" id="560024"/>
<dbReference type="ZFIN" id="ZDB-GENE-070112-1472">
    <property type="gene designation" value="slc47a2.1"/>
</dbReference>
<dbReference type="eggNOG" id="KOG1347">
    <property type="taxonomic scope" value="Eukaryota"/>
</dbReference>
<dbReference type="HOGENOM" id="CLU_012893_1_3_1"/>
<dbReference type="InParanoid" id="A1L1P9"/>
<dbReference type="OMA" id="MCENTEA"/>
<dbReference type="OrthoDB" id="2126698at2759"/>
<dbReference type="PhylomeDB" id="A1L1P9"/>
<dbReference type="TreeFam" id="TF324441"/>
<dbReference type="Reactome" id="R-DRE-425366">
    <property type="pathway name" value="Transport of bile salts and organic acids, metal ions and amine compounds"/>
</dbReference>
<dbReference type="PRO" id="PR:A1L1P9"/>
<dbReference type="Proteomes" id="UP000000437">
    <property type="component" value="Chromosome 21"/>
</dbReference>
<dbReference type="Bgee" id="ENSDARG00000060051">
    <property type="expression patterns" value="Expressed in mesonephros and 13 other cell types or tissues"/>
</dbReference>
<dbReference type="ExpressionAtlas" id="A1L1P9">
    <property type="expression patterns" value="baseline"/>
</dbReference>
<dbReference type="GO" id="GO:0016324">
    <property type="term" value="C:apical plasma membrane"/>
    <property type="evidence" value="ECO:0000250"/>
    <property type="project" value="UniProtKB"/>
</dbReference>
<dbReference type="GO" id="GO:0016020">
    <property type="term" value="C:membrane"/>
    <property type="evidence" value="ECO:0000318"/>
    <property type="project" value="GO_Central"/>
</dbReference>
<dbReference type="GO" id="GO:0015297">
    <property type="term" value="F:antiporter activity"/>
    <property type="evidence" value="ECO:0000250"/>
    <property type="project" value="UniProtKB"/>
</dbReference>
<dbReference type="GO" id="GO:0015101">
    <property type="term" value="F:organic cation transmembrane transporter activity"/>
    <property type="evidence" value="ECO:0000250"/>
    <property type="project" value="UniProtKB"/>
</dbReference>
<dbReference type="GO" id="GO:0022857">
    <property type="term" value="F:transmembrane transporter activity"/>
    <property type="evidence" value="ECO:0000318"/>
    <property type="project" value="GO_Central"/>
</dbReference>
<dbReference type="GO" id="GO:0042910">
    <property type="term" value="F:xenobiotic transmembrane transporter activity"/>
    <property type="evidence" value="ECO:0000250"/>
    <property type="project" value="UniProtKB"/>
</dbReference>
<dbReference type="GO" id="GO:0015695">
    <property type="term" value="P:organic cation transport"/>
    <property type="evidence" value="ECO:0000250"/>
    <property type="project" value="UniProtKB"/>
</dbReference>
<dbReference type="GO" id="GO:1990961">
    <property type="term" value="P:xenobiotic detoxification by transmembrane export across the plasma membrane"/>
    <property type="evidence" value="ECO:0000250"/>
    <property type="project" value="UniProtKB"/>
</dbReference>
<dbReference type="CDD" id="cd13132">
    <property type="entry name" value="MATE_eukaryotic"/>
    <property type="match status" value="1"/>
</dbReference>
<dbReference type="InterPro" id="IPR045069">
    <property type="entry name" value="MATE_euk"/>
</dbReference>
<dbReference type="InterPro" id="IPR002528">
    <property type="entry name" value="MATE_fam"/>
</dbReference>
<dbReference type="NCBIfam" id="TIGR00797">
    <property type="entry name" value="matE"/>
    <property type="match status" value="1"/>
</dbReference>
<dbReference type="PANTHER" id="PTHR11206">
    <property type="entry name" value="MULTIDRUG RESISTANCE PROTEIN"/>
    <property type="match status" value="1"/>
</dbReference>
<dbReference type="Pfam" id="PF01554">
    <property type="entry name" value="MatE"/>
    <property type="match status" value="2"/>
</dbReference>
<name>S47A1_DANRE</name>
<accession>A1L1P9</accession>
<comment type="function">
    <text evidence="1">Solute transporter for tetraethylammonium (TEA), cimetidine, metformin, guanidine, N-methylnicotinamide (NMN) and also the zwitterionic cephalosporin cephalexin. Responsible for the secretion of cationic drugs across the brush border membranes (By similarity).</text>
</comment>
<comment type="subcellular location">
    <subcellularLocation>
        <location evidence="1">Cell membrane</location>
        <topology evidence="1">Multi-pass membrane protein</topology>
    </subcellularLocation>
</comment>
<comment type="similarity">
    <text evidence="3">Belongs to the multi antimicrobial extrusion (MATE) (TC 2.A.66.1) family.</text>
</comment>
<reference key="1">
    <citation type="submission" date="2006-12" db="EMBL/GenBank/DDBJ databases">
        <authorList>
            <consortium name="NIH - Zebrafish Gene Collection (ZGC) project"/>
        </authorList>
    </citation>
    <scope>NUCLEOTIDE SEQUENCE [LARGE SCALE MRNA]</scope>
    <source>
        <tissue>Kidney</tissue>
    </source>
</reference>
<gene>
    <name type="primary">slc47a1</name>
    <name type="synonym">mate1</name>
    <name type="ORF">zgc:158231</name>
</gene>
<evidence type="ECO:0000250" key="1"/>
<evidence type="ECO:0000255" key="2"/>
<evidence type="ECO:0000305" key="3"/>
<keyword id="KW-1003">Cell membrane</keyword>
<keyword id="KW-0472">Membrane</keyword>
<keyword id="KW-1185">Reference proteome</keyword>
<keyword id="KW-0812">Transmembrane</keyword>
<keyword id="KW-1133">Transmembrane helix</keyword>
<keyword id="KW-0813">Transport</keyword>
<sequence>MDSITSYNVTQMNGDTKQEKCDDVLSTSSTQKFCGGCRKKLRSLLPVNYKTEIVELLKLAGPVFISQLMIFLISFVSTVFCGHLGKTELAGVALAIAVINVTGISIGSGLASACDTLISQTFGSNNLKRVGVILQRGILILLLACFPCWALLINTEPILLAVRQSPNVASLSQLYVKIFMPALPAAFMYQLQGRYLQNQGIIWPQVITGAAGNILNALINYVFLHLLELGVAGSAAANTISQYSLAVFLYVYIRWKNLHKATWDGWSRDCLQEWGAFIRLALPSMLMLCVEWWTYEIGGFLAGLISETELGAQSVVYELATIAYMFPLGFAVAASVRVGNALGAGNTERAKLSAKVALVCGVLVSCVVATLIGCTKDVIAYIFTTEEEIVSRVSQVMIMYGFFHLFDAIAGITGGIVRGAGKQLLGALCNIVGYYFVGFPTGVSLMFALSMGIIGLWIGFFGCVFLQSLFFIILIYKLDWKKATQEALIRAGVQLTETKDESFGLENKGCTEEAAKESQITEEGLTDANTDLEGLSKGGEGISEAGAKTTVGAVLTTKQLIVRRGLAVLLMVLILAGGIVLNEMLVRYLR</sequence>
<feature type="chain" id="PRO_0000312850" description="Multidrug and toxin extrusion protein 1">
    <location>
        <begin position="1"/>
        <end position="590"/>
    </location>
</feature>
<feature type="topological domain" description="Cytoplasmic" evidence="2">
    <location>
        <begin position="1"/>
        <end position="59"/>
    </location>
</feature>
<feature type="transmembrane region" description="Helical" evidence="2">
    <location>
        <begin position="60"/>
        <end position="80"/>
    </location>
</feature>
<feature type="topological domain" description="Extracellular" evidence="2">
    <location>
        <begin position="81"/>
        <end position="88"/>
    </location>
</feature>
<feature type="transmembrane region" description="Helical" evidence="2">
    <location>
        <begin position="89"/>
        <end position="109"/>
    </location>
</feature>
<feature type="topological domain" description="Cytoplasmic" evidence="2">
    <location>
        <begin position="110"/>
        <end position="137"/>
    </location>
</feature>
<feature type="transmembrane region" description="Helical" evidence="2">
    <location>
        <begin position="138"/>
        <end position="158"/>
    </location>
</feature>
<feature type="topological domain" description="Extracellular" evidence="2">
    <location>
        <begin position="159"/>
        <end position="167"/>
    </location>
</feature>
<feature type="transmembrane region" description="Helical" evidence="2">
    <location>
        <begin position="168"/>
        <end position="188"/>
    </location>
</feature>
<feature type="topological domain" description="Cytoplasmic" evidence="2">
    <location>
        <begin position="189"/>
        <end position="199"/>
    </location>
</feature>
<feature type="transmembrane region" description="Helical" evidence="2">
    <location>
        <begin position="200"/>
        <end position="222"/>
    </location>
</feature>
<feature type="topological domain" description="Extracellular" evidence="2">
    <location>
        <begin position="223"/>
        <end position="231"/>
    </location>
</feature>
<feature type="transmembrane region" description="Helical" evidence="2">
    <location>
        <begin position="232"/>
        <end position="254"/>
    </location>
</feature>
<feature type="topological domain" description="Cytoplasmic" evidence="2">
    <location>
        <begin position="255"/>
        <end position="274"/>
    </location>
</feature>
<feature type="transmembrane region" description="Helical" evidence="2">
    <location>
        <begin position="275"/>
        <end position="294"/>
    </location>
</feature>
<feature type="topological domain" description="Extracellular" evidence="2">
    <location>
        <begin position="295"/>
        <end position="313"/>
    </location>
</feature>
<feature type="transmembrane region" description="Helical" evidence="2">
    <location>
        <begin position="314"/>
        <end position="334"/>
    </location>
</feature>
<feature type="topological domain" description="Cytoplasmic" evidence="2">
    <location>
        <begin position="335"/>
        <end position="351"/>
    </location>
</feature>
<feature type="transmembrane region" description="Helical" evidence="2">
    <location>
        <begin position="352"/>
        <end position="372"/>
    </location>
</feature>
<feature type="topological domain" description="Extracellular" evidence="2">
    <location>
        <begin position="373"/>
        <end position="395"/>
    </location>
</feature>
<feature type="transmembrane region" description="Helical" evidence="2">
    <location>
        <begin position="396"/>
        <end position="416"/>
    </location>
</feature>
<feature type="topological domain" description="Cytoplasmic" evidence="2">
    <location>
        <begin position="417"/>
        <end position="430"/>
    </location>
</feature>
<feature type="transmembrane region" description="Helical" evidence="2">
    <location>
        <begin position="431"/>
        <end position="451"/>
    </location>
</feature>
<feature type="topological domain" description="Extracellular" evidence="2">
    <location>
        <position position="452"/>
    </location>
</feature>
<feature type="transmembrane region" description="Helical" evidence="2">
    <location>
        <begin position="453"/>
        <end position="473"/>
    </location>
</feature>
<feature type="topological domain" description="Cytoplasmic" evidence="2">
    <location>
        <begin position="474"/>
        <end position="565"/>
    </location>
</feature>
<feature type="transmembrane region" description="Helical" evidence="2">
    <location>
        <begin position="566"/>
        <end position="586"/>
    </location>
</feature>
<feature type="topological domain" description="Extracellular" evidence="2">
    <location>
        <begin position="587"/>
        <end position="590"/>
    </location>
</feature>
<proteinExistence type="evidence at transcript level"/>